<name>ALG12_MOUSE</name>
<dbReference type="EC" id="2.4.1.260" evidence="1"/>
<dbReference type="EMBL" id="AJ429133">
    <property type="protein sequence ID" value="CAD22101.1"/>
    <property type="molecule type" value="mRNA"/>
</dbReference>
<dbReference type="EMBL" id="AK142322">
    <property type="protein sequence ID" value="BAE25031.1"/>
    <property type="molecule type" value="mRNA"/>
</dbReference>
<dbReference type="EMBL" id="AC117700">
    <property type="status" value="NOT_ANNOTATED_CDS"/>
    <property type="molecule type" value="Genomic_DNA"/>
</dbReference>
<dbReference type="CCDS" id="CCDS49694.1"/>
<dbReference type="RefSeq" id="NP_001135829.1">
    <property type="nucleotide sequence ID" value="NM_001142357.2"/>
</dbReference>
<dbReference type="RefSeq" id="NP_001402946.1">
    <property type="nucleotide sequence ID" value="NM_001416017.1"/>
</dbReference>
<dbReference type="RefSeq" id="NP_001402947.1">
    <property type="nucleotide sequence ID" value="NM_001416018.1"/>
</dbReference>
<dbReference type="RefSeq" id="NP_663452.1">
    <property type="nucleotide sequence ID" value="NM_145477.2"/>
</dbReference>
<dbReference type="RefSeq" id="XP_006520905.1">
    <property type="nucleotide sequence ID" value="XM_006520842.2"/>
</dbReference>
<dbReference type="FunCoup" id="Q8VDB2">
    <property type="interactions" value="1024"/>
</dbReference>
<dbReference type="STRING" id="10090.ENSMUSP00000123935"/>
<dbReference type="CAZy" id="GT22">
    <property type="family name" value="Glycosyltransferase Family 22"/>
</dbReference>
<dbReference type="GlyGen" id="Q8VDB2">
    <property type="glycosylation" value="1 site, 1 N-linked glycan (1 site)"/>
</dbReference>
<dbReference type="iPTMnet" id="Q8VDB2"/>
<dbReference type="PhosphoSitePlus" id="Q8VDB2"/>
<dbReference type="PaxDb" id="10090-ENSMUSP00000123935"/>
<dbReference type="ProteomicsDB" id="296395"/>
<dbReference type="Antibodypedia" id="28215">
    <property type="antibodies" value="93 antibodies from 22 providers"/>
</dbReference>
<dbReference type="DNASU" id="223774"/>
<dbReference type="Ensembl" id="ENSMUST00000162183.8">
    <property type="protein sequence ID" value="ENSMUSP00000123935.2"/>
    <property type="gene ID" value="ENSMUSG00000035845.18"/>
</dbReference>
<dbReference type="GeneID" id="223774"/>
<dbReference type="KEGG" id="mmu:223774"/>
<dbReference type="UCSC" id="uc007xeo.2">
    <property type="organism name" value="mouse"/>
</dbReference>
<dbReference type="AGR" id="MGI:2385025"/>
<dbReference type="CTD" id="79087"/>
<dbReference type="MGI" id="MGI:2385025">
    <property type="gene designation" value="Alg12"/>
</dbReference>
<dbReference type="VEuPathDB" id="HostDB:ENSMUSG00000035845"/>
<dbReference type="eggNOG" id="KOG2516">
    <property type="taxonomic scope" value="Eukaryota"/>
</dbReference>
<dbReference type="GeneTree" id="ENSGT00950000183090"/>
<dbReference type="HOGENOM" id="CLU_008917_0_0_1"/>
<dbReference type="InParanoid" id="Q8VDB2"/>
<dbReference type="OMA" id="WWVEVRM"/>
<dbReference type="OrthoDB" id="19039at2759"/>
<dbReference type="PhylomeDB" id="Q8VDB2"/>
<dbReference type="TreeFam" id="TF314453"/>
<dbReference type="Reactome" id="R-MMU-446193">
    <property type="pathway name" value="Biosynthesis of the N-glycan precursor (dolichol lipid-linked oligosaccharide, LLO) and transfer to a nascent protein"/>
</dbReference>
<dbReference type="UniPathway" id="UPA00378"/>
<dbReference type="BioGRID-ORCS" id="223774">
    <property type="hits" value="5 hits in 76 CRISPR screens"/>
</dbReference>
<dbReference type="ChiTaRS" id="Alg12">
    <property type="organism name" value="mouse"/>
</dbReference>
<dbReference type="PRO" id="PR:Q8VDB2"/>
<dbReference type="Proteomes" id="UP000000589">
    <property type="component" value="Chromosome 15"/>
</dbReference>
<dbReference type="RNAct" id="Q8VDB2">
    <property type="molecule type" value="protein"/>
</dbReference>
<dbReference type="Bgee" id="ENSMUSG00000035845">
    <property type="expression patterns" value="Expressed in spermatid and 183 other cell types or tissues"/>
</dbReference>
<dbReference type="ExpressionAtlas" id="Q8VDB2">
    <property type="expression patterns" value="baseline and differential"/>
</dbReference>
<dbReference type="GO" id="GO:0005789">
    <property type="term" value="C:endoplasmic reticulum membrane"/>
    <property type="evidence" value="ECO:0007669"/>
    <property type="project" value="UniProtKB-SubCell"/>
</dbReference>
<dbReference type="GO" id="GO:0052917">
    <property type="term" value="F:dolichyl-P-Man:Man(7)GlcNAc(2)-PP-dolichol alpha-1,6-mannosyltransferase"/>
    <property type="evidence" value="ECO:0007669"/>
    <property type="project" value="UniProtKB-EC"/>
</dbReference>
<dbReference type="GO" id="GO:0006488">
    <property type="term" value="P:dolichol-linked oligosaccharide biosynthetic process"/>
    <property type="evidence" value="ECO:0000266"/>
    <property type="project" value="MGI"/>
</dbReference>
<dbReference type="InterPro" id="IPR005599">
    <property type="entry name" value="GPI_mannosylTrfase"/>
</dbReference>
<dbReference type="PANTHER" id="PTHR22760:SF1">
    <property type="entry name" value="DOL-P-MAN:MAN(7)GLCNAC(2)-PP-DOL ALPHA-1,6-MANNOSYLTRANSFERASE"/>
    <property type="match status" value="1"/>
</dbReference>
<dbReference type="PANTHER" id="PTHR22760">
    <property type="entry name" value="GLYCOSYLTRANSFERASE"/>
    <property type="match status" value="1"/>
</dbReference>
<dbReference type="Pfam" id="PF03901">
    <property type="entry name" value="Glyco_transf_22"/>
    <property type="match status" value="1"/>
</dbReference>
<sequence>MAGKKSSGKRSWPLLGLLVTVATIHLVICPYTKVEESFNLQATHDLLYHQLDIDKYDHHEFPGVVPRTFLGPLVIAAFSSPVVYVLSLLEVSKFYSQLIVRGVLGLGVISGLWTLQKEVRQQFGATVAVMFCWISATQFHLMFYCTRTLPNVLALAVVLPALTAWLQRRWALFVWLSAFVIIGFRAELAMLLGIALLLTLYQRRLTVARVLRHAIPAGLLCLGLTVAVDSYFWRYLVWPEGVVLWYNTVLNKSSNWGTSPLLWYFYSALPRGLGCSLLFIPLGAVDRRTYALALPSLGFVALYSLLPHKELRFIIYTFPVLNIMAARGCTYILNKKSWPYKVRAMLVTGHILVNVAYTATSLYVSHFNYPGGVAMQQLHELVPPQTDVLLHIDVAAAQTGVSRFLQVNDDWRYDKSEDVGAAAMLNYTHILMEAVPGHPALYRDTHRVLASIEGTTGISLNLMKLPPFDVNLQTKLVLLERLLRPA</sequence>
<comment type="function">
    <text evidence="1">Mannosyltransferase that operates in the biosynthetic pathway of dolichol-linked oligosaccharides, the glycan precursors employed in protein asparagine (N)-glycosylation. The assembly of dolichol-linked oligosaccharides begins on the cytosolic side of the endoplasmic reticulum membrane and finishes in its lumen. The sequential addition of sugars to dolichol pyrophosphate produces dolichol-linked oligosaccharides containing fourteen sugars, including two GlcNAcs, nine mannoses and three glucoses. Once assembled, the oligosaccharide is transferred from the lipid to nascent proteins by oligosaccharyltransferases. In the lumen of the endoplasmic reticulum, adds the eighth mannose residue in an alpha-1,6 linkage onto Man(7)GlcNAc(2)-PP-dolichol to produce Man(8)GlcNAc(2)-PP-dolichol.</text>
</comment>
<comment type="catalytic activity">
    <reaction evidence="1">
        <text>an alpha-D-Man-(1-&gt;2)-alpha-D-Man-(1-&gt;2)-alpha-D-Man-(1-&gt;3)-[alpha-D-Man-(1-&gt;2)-alpha-D-Man-(1-&gt;3)-alpha-D-Man-(1-&gt;6)]-beta-D-Man-(1-&gt;4)-beta-D-GlcNAc-(1-&gt;4)-alpha-D-GlcNAc-diphospho-di-trans,poly-cis-dolichol + a di-trans,poly-cis-dolichyl beta-D-mannosyl phosphate = an alpha-D-Man-(1-&gt;2)-alpha-D-Man-(1-&gt;2)-alpha-D-Man-(1-&gt;3)-[alpha-D-Man-(1-&gt;2)-alpha-D-Man-(1-&gt;3)-[alpha-D-Man-(1-&gt;6)]-alpha-D-Man-(1-&gt;6)]-beta-D-Man-(1-&gt;4)-beta-D-GlcNAc-(1-&gt;4)-alpha-D-GlcNAc-diphospho-di-trans,poly-cis-dolichol + a di-trans,poly-cis-dolichyl phosphate + H(+)</text>
        <dbReference type="Rhea" id="RHEA:29535"/>
        <dbReference type="Rhea" id="RHEA-COMP:19498"/>
        <dbReference type="Rhea" id="RHEA-COMP:19501"/>
        <dbReference type="Rhea" id="RHEA-COMP:19518"/>
        <dbReference type="Rhea" id="RHEA-COMP:19519"/>
        <dbReference type="ChEBI" id="CHEBI:15378"/>
        <dbReference type="ChEBI" id="CHEBI:57683"/>
        <dbReference type="ChEBI" id="CHEBI:58211"/>
        <dbReference type="ChEBI" id="CHEBI:132517"/>
        <dbReference type="ChEBI" id="CHEBI:132519"/>
        <dbReference type="EC" id="2.4.1.260"/>
    </reaction>
    <physiologicalReaction direction="left-to-right" evidence="1">
        <dbReference type="Rhea" id="RHEA:29536"/>
    </physiologicalReaction>
</comment>
<comment type="pathway">
    <text evidence="1">Protein modification; protein glycosylation.</text>
</comment>
<comment type="subcellular location">
    <subcellularLocation>
        <location evidence="1">Endoplasmic reticulum membrane</location>
        <topology evidence="2">Multi-pass membrane protein</topology>
    </subcellularLocation>
</comment>
<comment type="similarity">
    <text evidence="3">Belongs to the glycosyltransferase 22 family.</text>
</comment>
<accession>Q8VDB2</accession>
<accession>Q3UQK8</accession>
<reference key="1">
    <citation type="journal article" date="2002" name="Mol. Biol. Evol.">
        <title>Common origin and evolution of glycosyltransferases using Dol-P-monosaccharides as donor substrate.</title>
        <authorList>
            <person name="Oriol R."/>
            <person name="Martinez-Duncker I."/>
            <person name="Chantret I."/>
            <person name="Mollicone R."/>
            <person name="Codogno P."/>
        </authorList>
    </citation>
    <scope>NUCLEOTIDE SEQUENCE [MRNA]</scope>
    <source>
        <strain>FVB/N</strain>
    </source>
</reference>
<reference key="2">
    <citation type="journal article" date="2005" name="Science">
        <title>The transcriptional landscape of the mammalian genome.</title>
        <authorList>
            <person name="Carninci P."/>
            <person name="Kasukawa T."/>
            <person name="Katayama S."/>
            <person name="Gough J."/>
            <person name="Frith M.C."/>
            <person name="Maeda N."/>
            <person name="Oyama R."/>
            <person name="Ravasi T."/>
            <person name="Lenhard B."/>
            <person name="Wells C."/>
            <person name="Kodzius R."/>
            <person name="Shimokawa K."/>
            <person name="Bajic V.B."/>
            <person name="Brenner S.E."/>
            <person name="Batalov S."/>
            <person name="Forrest A.R."/>
            <person name="Zavolan M."/>
            <person name="Davis M.J."/>
            <person name="Wilming L.G."/>
            <person name="Aidinis V."/>
            <person name="Allen J.E."/>
            <person name="Ambesi-Impiombato A."/>
            <person name="Apweiler R."/>
            <person name="Aturaliya R.N."/>
            <person name="Bailey T.L."/>
            <person name="Bansal M."/>
            <person name="Baxter L."/>
            <person name="Beisel K.W."/>
            <person name="Bersano T."/>
            <person name="Bono H."/>
            <person name="Chalk A.M."/>
            <person name="Chiu K.P."/>
            <person name="Choudhary V."/>
            <person name="Christoffels A."/>
            <person name="Clutterbuck D.R."/>
            <person name="Crowe M.L."/>
            <person name="Dalla E."/>
            <person name="Dalrymple B.P."/>
            <person name="de Bono B."/>
            <person name="Della Gatta G."/>
            <person name="di Bernardo D."/>
            <person name="Down T."/>
            <person name="Engstrom P."/>
            <person name="Fagiolini M."/>
            <person name="Faulkner G."/>
            <person name="Fletcher C.F."/>
            <person name="Fukushima T."/>
            <person name="Furuno M."/>
            <person name="Futaki S."/>
            <person name="Gariboldi M."/>
            <person name="Georgii-Hemming P."/>
            <person name="Gingeras T.R."/>
            <person name="Gojobori T."/>
            <person name="Green R.E."/>
            <person name="Gustincich S."/>
            <person name="Harbers M."/>
            <person name="Hayashi Y."/>
            <person name="Hensch T.K."/>
            <person name="Hirokawa N."/>
            <person name="Hill D."/>
            <person name="Huminiecki L."/>
            <person name="Iacono M."/>
            <person name="Ikeo K."/>
            <person name="Iwama A."/>
            <person name="Ishikawa T."/>
            <person name="Jakt M."/>
            <person name="Kanapin A."/>
            <person name="Katoh M."/>
            <person name="Kawasawa Y."/>
            <person name="Kelso J."/>
            <person name="Kitamura H."/>
            <person name="Kitano H."/>
            <person name="Kollias G."/>
            <person name="Krishnan S.P."/>
            <person name="Kruger A."/>
            <person name="Kummerfeld S.K."/>
            <person name="Kurochkin I.V."/>
            <person name="Lareau L.F."/>
            <person name="Lazarevic D."/>
            <person name="Lipovich L."/>
            <person name="Liu J."/>
            <person name="Liuni S."/>
            <person name="McWilliam S."/>
            <person name="Madan Babu M."/>
            <person name="Madera M."/>
            <person name="Marchionni L."/>
            <person name="Matsuda H."/>
            <person name="Matsuzawa S."/>
            <person name="Miki H."/>
            <person name="Mignone F."/>
            <person name="Miyake S."/>
            <person name="Morris K."/>
            <person name="Mottagui-Tabar S."/>
            <person name="Mulder N."/>
            <person name="Nakano N."/>
            <person name="Nakauchi H."/>
            <person name="Ng P."/>
            <person name="Nilsson R."/>
            <person name="Nishiguchi S."/>
            <person name="Nishikawa S."/>
            <person name="Nori F."/>
            <person name="Ohara O."/>
            <person name="Okazaki Y."/>
            <person name="Orlando V."/>
            <person name="Pang K.C."/>
            <person name="Pavan W.J."/>
            <person name="Pavesi G."/>
            <person name="Pesole G."/>
            <person name="Petrovsky N."/>
            <person name="Piazza S."/>
            <person name="Reed J."/>
            <person name="Reid J.F."/>
            <person name="Ring B.Z."/>
            <person name="Ringwald M."/>
            <person name="Rost B."/>
            <person name="Ruan Y."/>
            <person name="Salzberg S.L."/>
            <person name="Sandelin A."/>
            <person name="Schneider C."/>
            <person name="Schoenbach C."/>
            <person name="Sekiguchi K."/>
            <person name="Semple C.A."/>
            <person name="Seno S."/>
            <person name="Sessa L."/>
            <person name="Sheng Y."/>
            <person name="Shibata Y."/>
            <person name="Shimada H."/>
            <person name="Shimada K."/>
            <person name="Silva D."/>
            <person name="Sinclair B."/>
            <person name="Sperling S."/>
            <person name="Stupka E."/>
            <person name="Sugiura K."/>
            <person name="Sultana R."/>
            <person name="Takenaka Y."/>
            <person name="Taki K."/>
            <person name="Tammoja K."/>
            <person name="Tan S.L."/>
            <person name="Tang S."/>
            <person name="Taylor M.S."/>
            <person name="Tegner J."/>
            <person name="Teichmann S.A."/>
            <person name="Ueda H.R."/>
            <person name="van Nimwegen E."/>
            <person name="Verardo R."/>
            <person name="Wei C.L."/>
            <person name="Yagi K."/>
            <person name="Yamanishi H."/>
            <person name="Zabarovsky E."/>
            <person name="Zhu S."/>
            <person name="Zimmer A."/>
            <person name="Hide W."/>
            <person name="Bult C."/>
            <person name="Grimmond S.M."/>
            <person name="Teasdale R.D."/>
            <person name="Liu E.T."/>
            <person name="Brusic V."/>
            <person name="Quackenbush J."/>
            <person name="Wahlestedt C."/>
            <person name="Mattick J.S."/>
            <person name="Hume D.A."/>
            <person name="Kai C."/>
            <person name="Sasaki D."/>
            <person name="Tomaru Y."/>
            <person name="Fukuda S."/>
            <person name="Kanamori-Katayama M."/>
            <person name="Suzuki M."/>
            <person name="Aoki J."/>
            <person name="Arakawa T."/>
            <person name="Iida J."/>
            <person name="Imamura K."/>
            <person name="Itoh M."/>
            <person name="Kato T."/>
            <person name="Kawaji H."/>
            <person name="Kawagashira N."/>
            <person name="Kawashima T."/>
            <person name="Kojima M."/>
            <person name="Kondo S."/>
            <person name="Konno H."/>
            <person name="Nakano K."/>
            <person name="Ninomiya N."/>
            <person name="Nishio T."/>
            <person name="Okada M."/>
            <person name="Plessy C."/>
            <person name="Shibata K."/>
            <person name="Shiraki T."/>
            <person name="Suzuki S."/>
            <person name="Tagami M."/>
            <person name="Waki K."/>
            <person name="Watahiki A."/>
            <person name="Okamura-Oho Y."/>
            <person name="Suzuki H."/>
            <person name="Kawai J."/>
            <person name="Hayashizaki Y."/>
        </authorList>
    </citation>
    <scope>NUCLEOTIDE SEQUENCE [LARGE SCALE MRNA]</scope>
    <source>
        <strain>C57BL/6J</strain>
        <tissue>Heart</tissue>
    </source>
</reference>
<reference key="3">
    <citation type="journal article" date="2009" name="PLoS Biol.">
        <title>Lineage-specific biology revealed by a finished genome assembly of the mouse.</title>
        <authorList>
            <person name="Church D.M."/>
            <person name="Goodstadt L."/>
            <person name="Hillier L.W."/>
            <person name="Zody M.C."/>
            <person name="Goldstein S."/>
            <person name="She X."/>
            <person name="Bult C.J."/>
            <person name="Agarwala R."/>
            <person name="Cherry J.L."/>
            <person name="DiCuccio M."/>
            <person name="Hlavina W."/>
            <person name="Kapustin Y."/>
            <person name="Meric P."/>
            <person name="Maglott D."/>
            <person name="Birtle Z."/>
            <person name="Marques A.C."/>
            <person name="Graves T."/>
            <person name="Zhou S."/>
            <person name="Teague B."/>
            <person name="Potamousis K."/>
            <person name="Churas C."/>
            <person name="Place M."/>
            <person name="Herschleb J."/>
            <person name="Runnheim R."/>
            <person name="Forrest D."/>
            <person name="Amos-Landgraf J."/>
            <person name="Schwartz D.C."/>
            <person name="Cheng Z."/>
            <person name="Lindblad-Toh K."/>
            <person name="Eichler E.E."/>
            <person name="Ponting C.P."/>
        </authorList>
    </citation>
    <scope>NUCLEOTIDE SEQUENCE [LARGE SCALE GENOMIC DNA]</scope>
    <source>
        <strain>C57BL/6J</strain>
    </source>
</reference>
<gene>
    <name evidence="4" type="primary">Alg12</name>
</gene>
<organism>
    <name type="scientific">Mus musculus</name>
    <name type="common">Mouse</name>
    <dbReference type="NCBI Taxonomy" id="10090"/>
    <lineage>
        <taxon>Eukaryota</taxon>
        <taxon>Metazoa</taxon>
        <taxon>Chordata</taxon>
        <taxon>Craniata</taxon>
        <taxon>Vertebrata</taxon>
        <taxon>Euteleostomi</taxon>
        <taxon>Mammalia</taxon>
        <taxon>Eutheria</taxon>
        <taxon>Euarchontoglires</taxon>
        <taxon>Glires</taxon>
        <taxon>Rodentia</taxon>
        <taxon>Myomorpha</taxon>
        <taxon>Muroidea</taxon>
        <taxon>Muridae</taxon>
        <taxon>Murinae</taxon>
        <taxon>Mus</taxon>
        <taxon>Mus</taxon>
    </lineage>
</organism>
<keyword id="KW-0256">Endoplasmic reticulum</keyword>
<keyword id="KW-0328">Glycosyltransferase</keyword>
<keyword id="KW-0472">Membrane</keyword>
<keyword id="KW-1185">Reference proteome</keyword>
<keyword id="KW-0808">Transferase</keyword>
<keyword id="KW-0812">Transmembrane</keyword>
<keyword id="KW-1133">Transmembrane helix</keyword>
<proteinExistence type="evidence at transcript level"/>
<feature type="chain" id="PRO_0000215782" description="Dol-P-Man:Man(7)GlcNAc(2)-PP-Dol alpha-1,6-mannosyltransferase">
    <location>
        <begin position="1"/>
        <end position="486"/>
    </location>
</feature>
<feature type="transmembrane region" description="Helical" evidence="2">
    <location>
        <begin position="12"/>
        <end position="32"/>
    </location>
</feature>
<feature type="transmembrane region" description="Helical" evidence="2">
    <location>
        <begin position="69"/>
        <end position="89"/>
    </location>
</feature>
<feature type="transmembrane region" description="Helical" evidence="2">
    <location>
        <begin position="94"/>
        <end position="114"/>
    </location>
</feature>
<feature type="transmembrane region" description="Helical" evidence="2">
    <location>
        <begin position="123"/>
        <end position="143"/>
    </location>
</feature>
<feature type="transmembrane region" description="Helical" evidence="2">
    <location>
        <begin position="146"/>
        <end position="166"/>
    </location>
</feature>
<feature type="transmembrane region" description="Helical" evidence="2">
    <location>
        <begin position="178"/>
        <end position="198"/>
    </location>
</feature>
<feature type="transmembrane region" description="Helical" evidence="2">
    <location>
        <begin position="213"/>
        <end position="233"/>
    </location>
</feature>
<feature type="transmembrane region" description="Helical" evidence="2">
    <location>
        <begin position="265"/>
        <end position="285"/>
    </location>
</feature>
<feature type="transmembrane region" description="Helical" evidence="2">
    <location>
        <begin position="291"/>
        <end position="311"/>
    </location>
</feature>
<feature type="transmembrane region" description="Helical" evidence="2">
    <location>
        <begin position="313"/>
        <end position="333"/>
    </location>
</feature>
<feature type="transmembrane region" description="Helical" evidence="2">
    <location>
        <begin position="344"/>
        <end position="364"/>
    </location>
</feature>
<feature type="sequence conflict" description="In Ref. 1; CAD22101." evidence="3" ref="1">
    <original>W</original>
    <variation>G</variation>
    <location>
        <position position="245"/>
    </location>
</feature>
<feature type="sequence conflict" description="In Ref. 1; CAD22101." evidence="3" ref="1">
    <original>LVLLERLLRP</original>
    <variation>AGTSRAAA</variation>
    <location>
        <begin position="476"/>
        <end position="485"/>
    </location>
</feature>
<protein>
    <recommendedName>
        <fullName evidence="1">Dol-P-Man:Man(7)GlcNAc(2)-PP-Dol alpha-1,6-mannosyltransferase</fullName>
        <ecNumber evidence="1">2.4.1.260</ecNumber>
    </recommendedName>
    <alternativeName>
        <fullName>Asparagine-linked glycosylation protein 12 homolog</fullName>
    </alternativeName>
    <alternativeName>
        <fullName>Dolichyl-P-Man:Man(7)GlcNAc(2)-PP-dolichyl-alpha-1,6-mannosyltransferase</fullName>
    </alternativeName>
    <alternativeName>
        <fullName evidence="4">Mannosyltransferase ALG12 homolog</fullName>
    </alternativeName>
</protein>
<evidence type="ECO:0000250" key="1">
    <source>
        <dbReference type="UniProtKB" id="Q9BV10"/>
    </source>
</evidence>
<evidence type="ECO:0000255" key="2"/>
<evidence type="ECO:0000305" key="3"/>
<evidence type="ECO:0000312" key="4">
    <source>
        <dbReference type="MGI" id="MGI:2385025"/>
    </source>
</evidence>